<keyword id="KW-0963">Cytoplasm</keyword>
<keyword id="KW-0275">Fatty acid biosynthesis</keyword>
<keyword id="KW-0276">Fatty acid metabolism</keyword>
<keyword id="KW-0444">Lipid biosynthesis</keyword>
<keyword id="KW-0443">Lipid metabolism</keyword>
<keyword id="KW-0460">Magnesium</keyword>
<keyword id="KW-0479">Metal-binding</keyword>
<keyword id="KW-0808">Transferase</keyword>
<feature type="chain" id="PRO_0000175694" description="Holo-[acyl-carrier-protein] synthase">
    <location>
        <begin position="1"/>
        <end position="128"/>
    </location>
</feature>
<feature type="binding site" evidence="1">
    <location>
        <position position="8"/>
    </location>
    <ligand>
        <name>Mg(2+)</name>
        <dbReference type="ChEBI" id="CHEBI:18420"/>
    </ligand>
</feature>
<feature type="binding site" evidence="1">
    <location>
        <position position="59"/>
    </location>
    <ligand>
        <name>Mg(2+)</name>
        <dbReference type="ChEBI" id="CHEBI:18420"/>
    </ligand>
</feature>
<sequence>MLIGVGTDIVQIPRIEKILNLYQELFAKKILTSQELKQFTLLDKPNHATFLAKRFAAKEAVSKAFGVGIGQGINFKNITIINDNLGKPVVEVSSHYTNKLIPFHIHLSLSDDYPICIAFAIVESNCSV</sequence>
<evidence type="ECO:0000255" key="1">
    <source>
        <dbReference type="HAMAP-Rule" id="MF_00101"/>
    </source>
</evidence>
<name>ACPS_RICTY</name>
<comment type="function">
    <text evidence="1">Transfers the 4'-phosphopantetheine moiety from coenzyme A to a Ser of acyl-carrier-protein.</text>
</comment>
<comment type="catalytic activity">
    <reaction evidence="1">
        <text>apo-[ACP] + CoA = holo-[ACP] + adenosine 3',5'-bisphosphate + H(+)</text>
        <dbReference type="Rhea" id="RHEA:12068"/>
        <dbReference type="Rhea" id="RHEA-COMP:9685"/>
        <dbReference type="Rhea" id="RHEA-COMP:9690"/>
        <dbReference type="ChEBI" id="CHEBI:15378"/>
        <dbReference type="ChEBI" id="CHEBI:29999"/>
        <dbReference type="ChEBI" id="CHEBI:57287"/>
        <dbReference type="ChEBI" id="CHEBI:58343"/>
        <dbReference type="ChEBI" id="CHEBI:64479"/>
        <dbReference type="EC" id="2.7.8.7"/>
    </reaction>
</comment>
<comment type="cofactor">
    <cofactor evidence="1">
        <name>Mg(2+)</name>
        <dbReference type="ChEBI" id="CHEBI:18420"/>
    </cofactor>
</comment>
<comment type="subcellular location">
    <subcellularLocation>
        <location evidence="1">Cytoplasm</location>
    </subcellularLocation>
</comment>
<comment type="similarity">
    <text evidence="1">Belongs to the P-Pant transferase superfamily. AcpS family.</text>
</comment>
<proteinExistence type="inferred from homology"/>
<accession>Q68WF9</accession>
<gene>
    <name evidence="1" type="primary">acpS</name>
    <name type="ordered locus">RT0566</name>
</gene>
<organism>
    <name type="scientific">Rickettsia typhi (strain ATCC VR-144 / Wilmington)</name>
    <dbReference type="NCBI Taxonomy" id="257363"/>
    <lineage>
        <taxon>Bacteria</taxon>
        <taxon>Pseudomonadati</taxon>
        <taxon>Pseudomonadota</taxon>
        <taxon>Alphaproteobacteria</taxon>
        <taxon>Rickettsiales</taxon>
        <taxon>Rickettsiaceae</taxon>
        <taxon>Rickettsieae</taxon>
        <taxon>Rickettsia</taxon>
        <taxon>typhus group</taxon>
    </lineage>
</organism>
<dbReference type="EC" id="2.7.8.7" evidence="1"/>
<dbReference type="EMBL" id="AE017197">
    <property type="protein sequence ID" value="AAU04033.1"/>
    <property type="molecule type" value="Genomic_DNA"/>
</dbReference>
<dbReference type="RefSeq" id="WP_011191014.1">
    <property type="nucleotide sequence ID" value="NC_006142.1"/>
</dbReference>
<dbReference type="SMR" id="Q68WF9"/>
<dbReference type="KEGG" id="rty:RT0566"/>
<dbReference type="eggNOG" id="COG0736">
    <property type="taxonomic scope" value="Bacteria"/>
</dbReference>
<dbReference type="HOGENOM" id="CLU_089696_1_2_5"/>
<dbReference type="OrthoDB" id="517356at2"/>
<dbReference type="Proteomes" id="UP000000604">
    <property type="component" value="Chromosome"/>
</dbReference>
<dbReference type="GO" id="GO:0005737">
    <property type="term" value="C:cytoplasm"/>
    <property type="evidence" value="ECO:0007669"/>
    <property type="project" value="UniProtKB-SubCell"/>
</dbReference>
<dbReference type="GO" id="GO:0008897">
    <property type="term" value="F:holo-[acyl-carrier-protein] synthase activity"/>
    <property type="evidence" value="ECO:0007669"/>
    <property type="project" value="UniProtKB-UniRule"/>
</dbReference>
<dbReference type="GO" id="GO:0000287">
    <property type="term" value="F:magnesium ion binding"/>
    <property type="evidence" value="ECO:0007669"/>
    <property type="project" value="UniProtKB-UniRule"/>
</dbReference>
<dbReference type="GO" id="GO:0006633">
    <property type="term" value="P:fatty acid biosynthetic process"/>
    <property type="evidence" value="ECO:0007669"/>
    <property type="project" value="UniProtKB-UniRule"/>
</dbReference>
<dbReference type="Gene3D" id="3.90.470.20">
    <property type="entry name" value="4'-phosphopantetheinyl transferase domain"/>
    <property type="match status" value="1"/>
</dbReference>
<dbReference type="HAMAP" id="MF_00101">
    <property type="entry name" value="AcpS"/>
    <property type="match status" value="1"/>
</dbReference>
<dbReference type="InterPro" id="IPR008278">
    <property type="entry name" value="4-PPantetheinyl_Trfase_dom"/>
</dbReference>
<dbReference type="InterPro" id="IPR037143">
    <property type="entry name" value="4-PPantetheinyl_Trfase_dom_sf"/>
</dbReference>
<dbReference type="InterPro" id="IPR002582">
    <property type="entry name" value="ACPS"/>
</dbReference>
<dbReference type="InterPro" id="IPR004568">
    <property type="entry name" value="Ppantetheine-prot_Trfase_dom"/>
</dbReference>
<dbReference type="NCBIfam" id="TIGR00516">
    <property type="entry name" value="acpS"/>
    <property type="match status" value="1"/>
</dbReference>
<dbReference type="NCBIfam" id="TIGR00556">
    <property type="entry name" value="pantethn_trn"/>
    <property type="match status" value="1"/>
</dbReference>
<dbReference type="Pfam" id="PF01648">
    <property type="entry name" value="ACPS"/>
    <property type="match status" value="1"/>
</dbReference>
<dbReference type="SUPFAM" id="SSF56214">
    <property type="entry name" value="4'-phosphopantetheinyl transferase"/>
    <property type="match status" value="1"/>
</dbReference>
<protein>
    <recommendedName>
        <fullName evidence="1">Holo-[acyl-carrier-protein] synthase</fullName>
        <shortName evidence="1">Holo-ACP synthase</shortName>
        <ecNumber evidence="1">2.7.8.7</ecNumber>
    </recommendedName>
    <alternativeName>
        <fullName evidence="1">4'-phosphopantetheinyl transferase AcpS</fullName>
    </alternativeName>
</protein>
<reference key="1">
    <citation type="journal article" date="2004" name="J. Bacteriol.">
        <title>Complete genome sequence of Rickettsia typhi and comparison with sequences of other Rickettsiae.</title>
        <authorList>
            <person name="McLeod M.P."/>
            <person name="Qin X."/>
            <person name="Karpathy S.E."/>
            <person name="Gioia J."/>
            <person name="Highlander S.K."/>
            <person name="Fox G.E."/>
            <person name="McNeill T.Z."/>
            <person name="Jiang H."/>
            <person name="Muzny D."/>
            <person name="Jacob L.S."/>
            <person name="Hawes A.C."/>
            <person name="Sodergren E."/>
            <person name="Gill R."/>
            <person name="Hume J."/>
            <person name="Morgan M."/>
            <person name="Fan G."/>
            <person name="Amin A.G."/>
            <person name="Gibbs R.A."/>
            <person name="Hong C."/>
            <person name="Yu X.-J."/>
            <person name="Walker D.H."/>
            <person name="Weinstock G.M."/>
        </authorList>
    </citation>
    <scope>NUCLEOTIDE SEQUENCE [LARGE SCALE GENOMIC DNA]</scope>
    <source>
        <strain>ATCC VR-144 / Wilmington</strain>
    </source>
</reference>